<name>Y688_HAEIN</name>
<dbReference type="EMBL" id="L42023">
    <property type="protein sequence ID" value="AAC22349.1"/>
    <property type="molecule type" value="Genomic_DNA"/>
</dbReference>
<dbReference type="EMBL" id="AF132899">
    <property type="protein sequence ID" value="AAD38340.1"/>
    <property type="molecule type" value="Genomic_DNA"/>
</dbReference>
<dbReference type="EMBL" id="AF132900">
    <property type="protein sequence ID" value="AAD38342.1"/>
    <property type="molecule type" value="Genomic_DNA"/>
</dbReference>
<dbReference type="PIR" id="A64012">
    <property type="entry name" value="A64012"/>
</dbReference>
<dbReference type="RefSeq" id="NP_438848.1">
    <property type="nucleotide sequence ID" value="NC_000907.1"/>
</dbReference>
<dbReference type="SMR" id="P44037"/>
<dbReference type="STRING" id="71421.HI_0688"/>
<dbReference type="EnsemblBacteria" id="AAC22349">
    <property type="protein sequence ID" value="AAC22349"/>
    <property type="gene ID" value="HI_0688"/>
</dbReference>
<dbReference type="KEGG" id="hin:HI_0688"/>
<dbReference type="PATRIC" id="fig|71421.8.peg.719"/>
<dbReference type="eggNOG" id="ENOG50345RE">
    <property type="taxonomic scope" value="Bacteria"/>
</dbReference>
<dbReference type="HOGENOM" id="CLU_2259819_0_0_6"/>
<dbReference type="OrthoDB" id="28067at135625"/>
<dbReference type="BioCyc" id="HINF71421:G1GJ1-723-MONOMER"/>
<dbReference type="Proteomes" id="UP000000579">
    <property type="component" value="Chromosome"/>
</dbReference>
<dbReference type="Gene3D" id="3.30.360.10">
    <property type="entry name" value="Dihydrodipicolinate Reductase, domain 2"/>
    <property type="match status" value="1"/>
</dbReference>
<proteinExistence type="predicted"/>
<feature type="chain" id="PRO_0000077945" description="Uncharacterized protein HI_0688">
    <location>
        <begin position="1"/>
        <end position="103"/>
    </location>
</feature>
<protein>
    <recommendedName>
        <fullName>Uncharacterized protein HI_0688</fullName>
    </recommendedName>
</protein>
<reference key="1">
    <citation type="journal article" date="1995" name="Science">
        <title>Whole-genome random sequencing and assembly of Haemophilus influenzae Rd.</title>
        <authorList>
            <person name="Fleischmann R.D."/>
            <person name="Adams M.D."/>
            <person name="White O."/>
            <person name="Clayton R.A."/>
            <person name="Kirkness E.F."/>
            <person name="Kerlavage A.R."/>
            <person name="Bult C.J."/>
            <person name="Tomb J.-F."/>
            <person name="Dougherty B.A."/>
            <person name="Merrick J.M."/>
            <person name="McKenney K."/>
            <person name="Sutton G.G."/>
            <person name="FitzHugh W."/>
            <person name="Fields C.A."/>
            <person name="Gocayne J.D."/>
            <person name="Scott J.D."/>
            <person name="Shirley R."/>
            <person name="Liu L.-I."/>
            <person name="Glodek A."/>
            <person name="Kelley J.M."/>
            <person name="Weidman J.F."/>
            <person name="Phillips C.A."/>
            <person name="Spriggs T."/>
            <person name="Hedblom E."/>
            <person name="Cotton M.D."/>
            <person name="Utterback T.R."/>
            <person name="Hanna M.C."/>
            <person name="Nguyen D.T."/>
            <person name="Saudek D.M."/>
            <person name="Brandon R.C."/>
            <person name="Fine L.D."/>
            <person name="Fritchman J.L."/>
            <person name="Fuhrmann J.L."/>
            <person name="Geoghagen N.S.M."/>
            <person name="Gnehm C.L."/>
            <person name="McDonald L.A."/>
            <person name="Small K.V."/>
            <person name="Fraser C.M."/>
            <person name="Smith H.O."/>
            <person name="Venter J.C."/>
        </authorList>
    </citation>
    <scope>NUCLEOTIDE SEQUENCE [LARGE SCALE GENOMIC DNA]</scope>
    <source>
        <strain>ATCC 51907 / DSM 11121 / KW20 / Rd</strain>
    </source>
</reference>
<reference key="2">
    <citation type="submission" date="1999-03" db="EMBL/GenBank/DDBJ databases">
        <title>Different organization and regulation of the glpTQ operons between type b and nontypeable Haemophilus influenzae.</title>
        <authorList>
            <person name="Song X.M."/>
            <person name="Janson H."/>
        </authorList>
    </citation>
    <scope>NUCLEOTIDE SEQUENCE [GENOMIC DNA]</scope>
    <source>
        <strain>Eagan / Serotype B</strain>
        <strain>HK695 / Serotype B</strain>
    </source>
</reference>
<sequence>MFELDILGKDGRIKLLNNAETYELYQYSNKNNSAGNDYKSLILTCREDNDYQSERMIKAIKNIIHCMTNNHQPISSAETSLETIKIIHGIINSVKIGNDPNNI</sequence>
<accession>P44037</accession>
<keyword id="KW-1185">Reference proteome</keyword>
<organism>
    <name type="scientific">Haemophilus influenzae (strain ATCC 51907 / DSM 11121 / KW20 / Rd)</name>
    <dbReference type="NCBI Taxonomy" id="71421"/>
    <lineage>
        <taxon>Bacteria</taxon>
        <taxon>Pseudomonadati</taxon>
        <taxon>Pseudomonadota</taxon>
        <taxon>Gammaproteobacteria</taxon>
        <taxon>Pasteurellales</taxon>
        <taxon>Pasteurellaceae</taxon>
        <taxon>Haemophilus</taxon>
    </lineage>
</organism>
<gene>
    <name type="ordered locus">HI_0688</name>
</gene>